<name>Y18_BPT7</name>
<feature type="chain" id="PRO_0000106479" description="Protein 1.8">
    <location>
        <begin position="1"/>
        <end position="48"/>
    </location>
</feature>
<sequence>MHNFKSTPPADSLSDDFTSCSEWCRKMWEETFDDAYIKLYELWKSRGQ</sequence>
<organismHost>
    <name type="scientific">Escherichia coli</name>
    <dbReference type="NCBI Taxonomy" id="562"/>
</organismHost>
<protein>
    <recommendedName>
        <fullName>Protein 1.8</fullName>
    </recommendedName>
    <alternativeName>
        <fullName>Gene product 1.8</fullName>
        <shortName>Gp1.8</shortName>
    </alternativeName>
</protein>
<accession>P03794</accession>
<organism>
    <name type="scientific">Escherichia phage T7</name>
    <name type="common">Bacteriophage T7</name>
    <dbReference type="NCBI Taxonomy" id="10760"/>
    <lineage>
        <taxon>Viruses</taxon>
        <taxon>Duplodnaviria</taxon>
        <taxon>Heunggongvirae</taxon>
        <taxon>Uroviricota</taxon>
        <taxon>Caudoviricetes</taxon>
        <taxon>Autographiviridae</taxon>
        <taxon>Studiervirinae</taxon>
        <taxon>Teseptimavirus</taxon>
        <taxon>Teseptimavirus T7</taxon>
    </lineage>
</organism>
<dbReference type="EMBL" id="V01146">
    <property type="protein sequence ID" value="CAA24398.1"/>
    <property type="molecule type" value="Genomic_DNA"/>
</dbReference>
<dbReference type="EMBL" id="V01127">
    <property type="protein sequence ID" value="CAA24341.1"/>
    <property type="molecule type" value="Genomic_DNA"/>
</dbReference>
<dbReference type="PIR" id="B43003">
    <property type="entry name" value="Q1BP87"/>
</dbReference>
<dbReference type="RefSeq" id="NP_041968.1">
    <property type="nucleotide sequence ID" value="NC_001604.1"/>
</dbReference>
<dbReference type="GeneID" id="1261054"/>
<dbReference type="KEGG" id="vg:1261054"/>
<dbReference type="OrthoDB" id="37667at10239"/>
<dbReference type="Proteomes" id="UP000000840">
    <property type="component" value="Genome"/>
</dbReference>
<keyword id="KW-1185">Reference proteome</keyword>
<reference key="1">
    <citation type="journal article" date="1983" name="J. Mol. Biol.">
        <title>Complete nucleotide sequence of bacteriophage T7 DNA and the locations of T7 genetic elements.</title>
        <authorList>
            <person name="Dunn J.J."/>
            <person name="Studier F.W."/>
        </authorList>
    </citation>
    <scope>NUCLEOTIDE SEQUENCE [LARGE SCALE GENOMIC DNA]</scope>
</reference>
<reference key="2">
    <citation type="journal article" date="1981" name="J. Mol. Biol.">
        <title>Nucleotide sequence from the genetic left end of bacteriophage T7 DNA to the beginning of gene 4.</title>
        <authorList>
            <person name="Dunn J.J."/>
            <person name="Studier F.W."/>
        </authorList>
    </citation>
    <scope>NUCLEOTIDE SEQUENCE [GENOMIC DNA]</scope>
</reference>
<proteinExistence type="predicted"/>